<reference key="1">
    <citation type="journal article" date="2003" name="Genome Res.">
        <title>The secreted protein discovery initiative (SPDI), a large-scale effort to identify novel human secreted and transmembrane proteins: a bioinformatics assessment.</title>
        <authorList>
            <person name="Clark H.F."/>
            <person name="Gurney A.L."/>
            <person name="Abaya E."/>
            <person name="Baker K."/>
            <person name="Baldwin D.T."/>
            <person name="Brush J."/>
            <person name="Chen J."/>
            <person name="Chow B."/>
            <person name="Chui C."/>
            <person name="Crowley C."/>
            <person name="Currell B."/>
            <person name="Deuel B."/>
            <person name="Dowd P."/>
            <person name="Eaton D."/>
            <person name="Foster J.S."/>
            <person name="Grimaldi C."/>
            <person name="Gu Q."/>
            <person name="Hass P.E."/>
            <person name="Heldens S."/>
            <person name="Huang A."/>
            <person name="Kim H.S."/>
            <person name="Klimowski L."/>
            <person name="Jin Y."/>
            <person name="Johnson S."/>
            <person name="Lee J."/>
            <person name="Lewis L."/>
            <person name="Liao D."/>
            <person name="Mark M.R."/>
            <person name="Robbie E."/>
            <person name="Sanchez C."/>
            <person name="Schoenfeld J."/>
            <person name="Seshagiri S."/>
            <person name="Simmons L."/>
            <person name="Singh J."/>
            <person name="Smith V."/>
            <person name="Stinson J."/>
            <person name="Vagts A."/>
            <person name="Vandlen R.L."/>
            <person name="Watanabe C."/>
            <person name="Wieand D."/>
            <person name="Woods K."/>
            <person name="Xie M.-H."/>
            <person name="Yansura D.G."/>
            <person name="Yi S."/>
            <person name="Yu G."/>
            <person name="Yuan J."/>
            <person name="Zhang M."/>
            <person name="Zhang Z."/>
            <person name="Goddard A.D."/>
            <person name="Wood W.I."/>
            <person name="Godowski P.J."/>
            <person name="Gray A.M."/>
        </authorList>
    </citation>
    <scope>NUCLEOTIDE SEQUENCE [LARGE SCALE MRNA] (ISOFORM 2)</scope>
    <scope>VARIANT ARG-312</scope>
</reference>
<reference key="2">
    <citation type="journal article" date="2004" name="Nat. Genet.">
        <title>Complete sequencing and characterization of 21,243 full-length human cDNAs.</title>
        <authorList>
            <person name="Ota T."/>
            <person name="Suzuki Y."/>
            <person name="Nishikawa T."/>
            <person name="Otsuki T."/>
            <person name="Sugiyama T."/>
            <person name="Irie R."/>
            <person name="Wakamatsu A."/>
            <person name="Hayashi K."/>
            <person name="Sato H."/>
            <person name="Nagai K."/>
            <person name="Kimura K."/>
            <person name="Makita H."/>
            <person name="Sekine M."/>
            <person name="Obayashi M."/>
            <person name="Nishi T."/>
            <person name="Shibahara T."/>
            <person name="Tanaka T."/>
            <person name="Ishii S."/>
            <person name="Yamamoto J."/>
            <person name="Saito K."/>
            <person name="Kawai Y."/>
            <person name="Isono Y."/>
            <person name="Nakamura Y."/>
            <person name="Nagahari K."/>
            <person name="Murakami K."/>
            <person name="Yasuda T."/>
            <person name="Iwayanagi T."/>
            <person name="Wagatsuma M."/>
            <person name="Shiratori A."/>
            <person name="Sudo H."/>
            <person name="Hosoiri T."/>
            <person name="Kaku Y."/>
            <person name="Kodaira H."/>
            <person name="Kondo H."/>
            <person name="Sugawara M."/>
            <person name="Takahashi M."/>
            <person name="Kanda K."/>
            <person name="Yokoi T."/>
            <person name="Furuya T."/>
            <person name="Kikkawa E."/>
            <person name="Omura Y."/>
            <person name="Abe K."/>
            <person name="Kamihara K."/>
            <person name="Katsuta N."/>
            <person name="Sato K."/>
            <person name="Tanikawa M."/>
            <person name="Yamazaki M."/>
            <person name="Ninomiya K."/>
            <person name="Ishibashi T."/>
            <person name="Yamashita H."/>
            <person name="Murakawa K."/>
            <person name="Fujimori K."/>
            <person name="Tanai H."/>
            <person name="Kimata M."/>
            <person name="Watanabe M."/>
            <person name="Hiraoka S."/>
            <person name="Chiba Y."/>
            <person name="Ishida S."/>
            <person name="Ono Y."/>
            <person name="Takiguchi S."/>
            <person name="Watanabe S."/>
            <person name="Yosida M."/>
            <person name="Hotuta T."/>
            <person name="Kusano J."/>
            <person name="Kanehori K."/>
            <person name="Takahashi-Fujii A."/>
            <person name="Hara H."/>
            <person name="Tanase T.-O."/>
            <person name="Nomura Y."/>
            <person name="Togiya S."/>
            <person name="Komai F."/>
            <person name="Hara R."/>
            <person name="Takeuchi K."/>
            <person name="Arita M."/>
            <person name="Imose N."/>
            <person name="Musashino K."/>
            <person name="Yuuki H."/>
            <person name="Oshima A."/>
            <person name="Sasaki N."/>
            <person name="Aotsuka S."/>
            <person name="Yoshikawa Y."/>
            <person name="Matsunawa H."/>
            <person name="Ichihara T."/>
            <person name="Shiohata N."/>
            <person name="Sano S."/>
            <person name="Moriya S."/>
            <person name="Momiyama H."/>
            <person name="Satoh N."/>
            <person name="Takami S."/>
            <person name="Terashima Y."/>
            <person name="Suzuki O."/>
            <person name="Nakagawa S."/>
            <person name="Senoh A."/>
            <person name="Mizoguchi H."/>
            <person name="Goto Y."/>
            <person name="Shimizu F."/>
            <person name="Wakebe H."/>
            <person name="Hishigaki H."/>
            <person name="Watanabe T."/>
            <person name="Sugiyama A."/>
            <person name="Takemoto M."/>
            <person name="Kawakami B."/>
            <person name="Yamazaki M."/>
            <person name="Watanabe K."/>
            <person name="Kumagai A."/>
            <person name="Itakura S."/>
            <person name="Fukuzumi Y."/>
            <person name="Fujimori Y."/>
            <person name="Komiyama M."/>
            <person name="Tashiro H."/>
            <person name="Tanigami A."/>
            <person name="Fujiwara T."/>
            <person name="Ono T."/>
            <person name="Yamada K."/>
            <person name="Fujii Y."/>
            <person name="Ozaki K."/>
            <person name="Hirao M."/>
            <person name="Ohmori Y."/>
            <person name="Kawabata A."/>
            <person name="Hikiji T."/>
            <person name="Kobatake N."/>
            <person name="Inagaki H."/>
            <person name="Ikema Y."/>
            <person name="Okamoto S."/>
            <person name="Okitani R."/>
            <person name="Kawakami T."/>
            <person name="Noguchi S."/>
            <person name="Itoh T."/>
            <person name="Shigeta K."/>
            <person name="Senba T."/>
            <person name="Matsumura K."/>
            <person name="Nakajima Y."/>
            <person name="Mizuno T."/>
            <person name="Morinaga M."/>
            <person name="Sasaki M."/>
            <person name="Togashi T."/>
            <person name="Oyama M."/>
            <person name="Hata H."/>
            <person name="Watanabe M."/>
            <person name="Komatsu T."/>
            <person name="Mizushima-Sugano J."/>
            <person name="Satoh T."/>
            <person name="Shirai Y."/>
            <person name="Takahashi Y."/>
            <person name="Nakagawa K."/>
            <person name="Okumura K."/>
            <person name="Nagase T."/>
            <person name="Nomura N."/>
            <person name="Kikuchi H."/>
            <person name="Masuho Y."/>
            <person name="Yamashita R."/>
            <person name="Nakai K."/>
            <person name="Yada T."/>
            <person name="Nakamura Y."/>
            <person name="Ohara O."/>
            <person name="Isogai T."/>
            <person name="Sugano S."/>
        </authorList>
    </citation>
    <scope>NUCLEOTIDE SEQUENCE [LARGE SCALE MRNA] (ISOFORM 1)</scope>
    <scope>VARIANT ARG-312</scope>
    <source>
        <tissue>Colon</tissue>
    </source>
</reference>
<reference key="3">
    <citation type="submission" date="2004-06" db="EMBL/GenBank/DDBJ databases">
        <title>Cloning of human full open reading frames in Gateway(TM) system entry vector (pDONR201).</title>
        <authorList>
            <person name="Ebert L."/>
            <person name="Schick M."/>
            <person name="Neubert P."/>
            <person name="Schatten R."/>
            <person name="Henze S."/>
            <person name="Korn B."/>
        </authorList>
    </citation>
    <scope>NUCLEOTIDE SEQUENCE [LARGE SCALE MRNA] (ISOFORM 1)</scope>
    <scope>VARIANT ARG-312</scope>
</reference>
<reference key="4">
    <citation type="journal article" date="2006" name="Nature">
        <title>Human chromosome 11 DNA sequence and analysis including novel gene identification.</title>
        <authorList>
            <person name="Taylor T.D."/>
            <person name="Noguchi H."/>
            <person name="Totoki Y."/>
            <person name="Toyoda A."/>
            <person name="Kuroki Y."/>
            <person name="Dewar K."/>
            <person name="Lloyd C."/>
            <person name="Itoh T."/>
            <person name="Takeda T."/>
            <person name="Kim D.-W."/>
            <person name="She X."/>
            <person name="Barlow K.F."/>
            <person name="Bloom T."/>
            <person name="Bruford E."/>
            <person name="Chang J.L."/>
            <person name="Cuomo C.A."/>
            <person name="Eichler E."/>
            <person name="FitzGerald M.G."/>
            <person name="Jaffe D.B."/>
            <person name="LaButti K."/>
            <person name="Nicol R."/>
            <person name="Park H.-S."/>
            <person name="Seaman C."/>
            <person name="Sougnez C."/>
            <person name="Yang X."/>
            <person name="Zimmer A.R."/>
            <person name="Zody M.C."/>
            <person name="Birren B.W."/>
            <person name="Nusbaum C."/>
            <person name="Fujiyama A."/>
            <person name="Hattori M."/>
            <person name="Rogers J."/>
            <person name="Lander E.S."/>
            <person name="Sakaki Y."/>
        </authorList>
    </citation>
    <scope>NUCLEOTIDE SEQUENCE [LARGE SCALE GENOMIC DNA]</scope>
</reference>
<reference key="5">
    <citation type="journal article" date="2004" name="Genome Res.">
        <title>The status, quality, and expansion of the NIH full-length cDNA project: the Mammalian Gene Collection (MGC).</title>
        <authorList>
            <consortium name="The MGC Project Team"/>
        </authorList>
    </citation>
    <scope>NUCLEOTIDE SEQUENCE [LARGE SCALE MRNA] (ISOFORM 1)</scope>
    <scope>VARIANT ARG-312</scope>
    <source>
        <tissue>Lung</tissue>
        <tissue>Pancreas</tissue>
    </source>
</reference>
<reference key="6">
    <citation type="journal article" date="1999" name="Cytokine">
        <title>Identification and characterization of SIGIRR, a molecule representing a novel subtype of the IL-1R superfamily.</title>
        <authorList>
            <person name="Thomassen E."/>
            <person name="Renshaw B.R."/>
            <person name="Sims J.E."/>
        </authorList>
    </citation>
    <scope>CHARACTERIZATION</scope>
</reference>
<reference key="7">
    <citation type="journal article" date="2003" name="Eur. Cytokine Netw.">
        <title>Unique pattern of expression and inhibition of IL-1 signaling by the IL-1 receptor family member TIR8/SIGIRR.</title>
        <authorList>
            <person name="Polentarutti N."/>
            <person name="Rol G.P."/>
            <person name="Muzio M."/>
            <person name="Bosisio D."/>
            <person name="Camnasio M."/>
            <person name="Riva F."/>
            <person name="Zoja C."/>
            <person name="Benigni A."/>
            <person name="Tomasoni S."/>
            <person name="Vecchi A."/>
            <person name="Garlanda C."/>
            <person name="Mantovani A."/>
        </authorList>
    </citation>
    <scope>FUNCTION</scope>
    <scope>TISSUE SPECIFICITY</scope>
</reference>
<reference key="8">
    <citation type="journal article" date="2003" name="Nat. Immunol.">
        <title>SIGIRR, a negative regulator of Toll-like receptor-interleukin 1 receptor signaling.</title>
        <authorList>
            <person name="Wald D."/>
            <person name="Qin J."/>
            <person name="Zhao Z."/>
            <person name="Qian Y."/>
            <person name="Naramura M."/>
            <person name="Tian L."/>
            <person name="Towne J."/>
            <person name="Sims J.E."/>
            <person name="Stark G.R."/>
            <person name="Li X."/>
        </authorList>
    </citation>
    <scope>FUNCTION</scope>
    <scope>INTERACTION WITH IL1R1; TLR4; TLR5; TLR9; TRAF6 AND IRAK1</scope>
</reference>
<reference key="9">
    <citation type="journal article" date="2005" name="J. Biol. Chem.">
        <title>SIGIRR inhibits interleukin-1 receptor- and toll-like receptor 4-mediated signaling through different mechanisms.</title>
        <authorList>
            <person name="Qin J."/>
            <person name="Qian Y."/>
            <person name="Yao J."/>
            <person name="Grace C."/>
            <person name="Li X."/>
        </authorList>
    </citation>
    <scope>FUNCTION</scope>
    <scope>IDENTIFICATION IN IL1 AND LPS RECEPTOR COMPLEXES</scope>
</reference>
<reference key="10">
    <citation type="journal article" date="2010" name="Clin. Exp. Immunol.">
        <title>Down-regulation of single immunoglobulin interleukin-1R-related molecule (SIGIRR)/TIR8 expression in intestinal epithelial cells during inflammation.</title>
        <authorList>
            <person name="Kadota C."/>
            <person name="Ishihara S."/>
            <person name="Aziz M.M."/>
            <person name="Rumi M.A."/>
            <person name="Oshima N."/>
            <person name="Mishima Y."/>
            <person name="Moriyama I."/>
            <person name="Yuki T."/>
            <person name="Amano Y."/>
            <person name="Kinoshita Y."/>
        </authorList>
    </citation>
    <scope>INDUCTION</scope>
    <scope>TISSUE SPECIFICITY</scope>
</reference>
<reference key="11">
    <citation type="journal article" date="2011" name="Biochem. Biophys. Res. Commun.">
        <title>A novel binding protein of single immunoglobulin IL-1 receptor-related molecule: Paralemmin-3.</title>
        <authorList>
            <person name="Chen X."/>
            <person name="Wu X."/>
            <person name="Zhao Y."/>
            <person name="Wang G."/>
            <person name="Feng J."/>
            <person name="Li Q."/>
            <person name="Qian G."/>
        </authorList>
    </citation>
    <scope>INTERACTION WITH PALM3</scope>
</reference>
<reference key="12">
    <citation type="journal article" date="2014" name="J. Proteomics">
        <title>An enzyme assisted RP-RPLC approach for in-depth analysis of human liver phosphoproteome.</title>
        <authorList>
            <person name="Bian Y."/>
            <person name="Song C."/>
            <person name="Cheng K."/>
            <person name="Dong M."/>
            <person name="Wang F."/>
            <person name="Huang J."/>
            <person name="Sun D."/>
            <person name="Wang L."/>
            <person name="Ye M."/>
            <person name="Zou H."/>
        </authorList>
    </citation>
    <scope>IDENTIFICATION BY MASS SPECTROMETRY [LARGE SCALE ANALYSIS]</scope>
    <source>
        <tissue>Liver</tissue>
    </source>
</reference>
<reference key="13">
    <citation type="journal article" date="2015" name="Pediatrics">
        <title>SIGIRR genetic variants in premature infants with necrotizing enterocolitis.</title>
        <authorList>
            <person name="Sampath V."/>
            <person name="Menden H."/>
            <person name="Helbling D."/>
            <person name="Li K."/>
            <person name="Gastonguay A."/>
            <person name="Ramchandran R."/>
            <person name="Dimmock D.P."/>
        </authorList>
    </citation>
    <scope>VARIANTS TYR-80; ARG-115 AND ARG-312</scope>
    <scope>FUNCTION</scope>
</reference>
<accession>Q6IA17</accession>
<accession>Q3KQY2</accession>
<accession>Q6UXI3</accession>
<accession>Q9H733</accession>
<evidence type="ECO:0000250" key="1">
    <source>
        <dbReference type="UniProtKB" id="Q9JLZ8"/>
    </source>
</evidence>
<evidence type="ECO:0000255" key="2"/>
<evidence type="ECO:0000255" key="3">
    <source>
        <dbReference type="PROSITE-ProRule" id="PRU00114"/>
    </source>
</evidence>
<evidence type="ECO:0000255" key="4">
    <source>
        <dbReference type="PROSITE-ProRule" id="PRU00204"/>
    </source>
</evidence>
<evidence type="ECO:0000256" key="5">
    <source>
        <dbReference type="SAM" id="MobiDB-lite"/>
    </source>
</evidence>
<evidence type="ECO:0000269" key="6">
    <source>
    </source>
</evidence>
<evidence type="ECO:0000269" key="7">
    <source>
    </source>
</evidence>
<evidence type="ECO:0000269" key="8">
    <source>
    </source>
</evidence>
<evidence type="ECO:0000269" key="9">
    <source>
    </source>
</evidence>
<evidence type="ECO:0000269" key="10">
    <source>
    </source>
</evidence>
<evidence type="ECO:0000269" key="11">
    <source>
    </source>
</evidence>
<evidence type="ECO:0000269" key="12">
    <source>
    </source>
</evidence>
<evidence type="ECO:0000269" key="13">
    <source>
    </source>
</evidence>
<evidence type="ECO:0000269" key="14">
    <source>
    </source>
</evidence>
<evidence type="ECO:0000269" key="15">
    <source ref="3"/>
</evidence>
<evidence type="ECO:0000303" key="16">
    <source>
    </source>
</evidence>
<evidence type="ECO:0000305" key="17"/>
<feature type="chain" id="PRO_0000099065" description="Single Ig IL-1-related receptor">
    <location>
        <begin position="1"/>
        <end position="410"/>
    </location>
</feature>
<feature type="topological domain" description="Extracellular" evidence="2">
    <location>
        <begin position="1"/>
        <end position="118"/>
    </location>
</feature>
<feature type="transmembrane region" description="Helical; Signal-anchor for type III membrane protein" evidence="2">
    <location>
        <begin position="119"/>
        <end position="139"/>
    </location>
</feature>
<feature type="topological domain" description="Cytoplasmic" evidence="2">
    <location>
        <begin position="140"/>
        <end position="410"/>
    </location>
</feature>
<feature type="domain" description="Ig-like C2-type">
    <location>
        <begin position="9"/>
        <end position="109"/>
    </location>
</feature>
<feature type="domain" description="TIR" evidence="4">
    <location>
        <begin position="163"/>
        <end position="307"/>
    </location>
</feature>
<feature type="region of interest" description="Disordered" evidence="5">
    <location>
        <begin position="340"/>
        <end position="390"/>
    </location>
</feature>
<feature type="modified residue" description="Phosphoserine" evidence="1">
    <location>
        <position position="383"/>
    </location>
</feature>
<feature type="glycosylation site" description="N-linked (GlcNAc...) asparagine" evidence="2">
    <location>
        <position position="31"/>
    </location>
</feature>
<feature type="glycosylation site" description="N-linked (GlcNAc...) asparagine" evidence="2">
    <location>
        <position position="73"/>
    </location>
</feature>
<feature type="glycosylation site" description="N-linked (GlcNAc...) asparagine" evidence="2">
    <location>
        <position position="86"/>
    </location>
</feature>
<feature type="glycosylation site" description="N-linked (GlcNAc...) asparagine" evidence="2">
    <location>
        <position position="102"/>
    </location>
</feature>
<feature type="disulfide bond" evidence="3">
    <location>
        <begin position="32"/>
        <end position="98"/>
    </location>
</feature>
<feature type="splice variant" id="VSP_015717" description="In isoform 2." evidence="16">
    <original>VRGPVFGEPSAPPHTSGVSLGESRSSEVDVSDLGSRNYSARTDFYCLVSKDDM</original>
    <variation>MPAQPHSPTGEAQHRAEWGQAQGTGPGGALGVEDSSRHREPLHGLCPGGARPSVCLGTSWASQAITAGGEQGQPLAVGLGQGCGWPPQASRSPHPRCPGACFWRAISSTAHQWGLAGREPEQRSGRLGSRLAKLQCPHRLLLPGVQG</variation>
    <location>
        <begin position="358"/>
        <end position="410"/>
    </location>
</feature>
<feature type="sequence variant" id="VAR_074164" description="In dbSNP:rs117739035." evidence="14">
    <original>S</original>
    <variation>Y</variation>
    <location>
        <position position="80"/>
    </location>
</feature>
<feature type="sequence variant" id="VAR_074165" description="In dbSNP:rs111819059." evidence="14">
    <original>P</original>
    <variation>R</variation>
    <location>
        <position position="115"/>
    </location>
</feature>
<feature type="sequence variant" id="VAR_058702" description="In dbSNP:rs3210908." evidence="7 8 10 14 15">
    <original>Q</original>
    <variation>R</variation>
    <location>
        <position position="312"/>
    </location>
</feature>
<feature type="sequence conflict" description="In Ref. 3; CAG33619." evidence="17" ref="3">
    <original>M</original>
    <variation>I</variation>
    <location>
        <position position="410"/>
    </location>
</feature>
<name>SIGIR_HUMAN</name>
<protein>
    <recommendedName>
        <fullName>Single Ig IL-1-related receptor</fullName>
    </recommendedName>
    <alternativeName>
        <fullName>Single Ig IL-1R-related molecule</fullName>
    </alternativeName>
    <alternativeName>
        <fullName>Single immunoglobulin domain-containing IL1R-related protein</fullName>
    </alternativeName>
    <alternativeName>
        <fullName>Toll/interleukin-1 receptor 8</fullName>
        <shortName>TIR8</shortName>
    </alternativeName>
</protein>
<keyword id="KW-0025">Alternative splicing</keyword>
<keyword id="KW-1015">Disulfide bond</keyword>
<keyword id="KW-0325">Glycoprotein</keyword>
<keyword id="KW-0393">Immunoglobulin domain</keyword>
<keyword id="KW-0472">Membrane</keyword>
<keyword id="KW-0597">Phosphoprotein</keyword>
<keyword id="KW-1267">Proteomics identification</keyword>
<keyword id="KW-1185">Reference proteome</keyword>
<keyword id="KW-0735">Signal-anchor</keyword>
<keyword id="KW-0812">Transmembrane</keyword>
<keyword id="KW-1133">Transmembrane helix</keyword>
<sequence length="410" mass="45679">MPGVCDRAPDFLSPSEDQVLRPALGSSVALNCTAWVVSGPHCSLPSVQWLKDGLPLGIGGHYSLHEYSWVKANLSEVLVSSVLGVNVTSTEVYGAFTCSIQNISFSSFTLQRAGPTSHVAAVLASLLVLLALLLAALLYVKCRLNVLLWYQDAYGEVEINDGKLYDAYVSYSDCPEDRKFVNFILKPQLERRRGYKLFLDDRDLLPRAEPSADLLVNLSRCRRLIVVLSDAFLSRAWCSHSFREGLCRLLELTRRPIFITFEGQRRDPAHPALRLLRQHRHLVTLLLWRPGSVTPSSDFWKEVQLALPRKVQYRPVEGDPQTQLQDDKDPMLILRGRVPEGRALDSEVDPDPEGDLGVRGPVFGEPSAPPHTSGVSLGESRSSEVDVSDLGSRNYSARTDFYCLVSKDDM</sequence>
<comment type="function">
    <text evidence="6 9 11 14">Acts as a negative regulator of the Toll-like and IL-1R receptor signaling pathways. Attenuates the recruitment of receptor-proximal signaling components to the TLR4 receptor, probably through an TIR-TIR domain interaction with TLR4. Through its extracellular domain interferes with the heterodimerization of Il1R1 and IL1RAP.</text>
</comment>
<comment type="subunit">
    <text evidence="6 11 13">Interacts with IL1R1, IRAK1, TLR4, TLR5, TLR9 and TRAF6. Upon IL-1 stimulation found in a complex at least composed of IL1R1, SIGIRR, MYD88, IRAK1 and TRAF6. Upon stimulation with LPC found in a complex at least composed of TLR4, SIG1IR, MYD88, IRAK1 and TRAF6. Interacts with PALM3.</text>
</comment>
<comment type="interaction">
    <interactant intactId="EBI-719672">
        <id>Q6IA17</id>
    </interactant>
    <interactant intactId="EBI-6873185">
        <id>A6NDB9</id>
        <label>PALM3</label>
    </interactant>
    <organismsDiffer>false</organismsDiffer>
    <experiments>4</experiments>
</comment>
<comment type="subcellular location">
    <subcellularLocation>
        <location evidence="17">Membrane</location>
        <topology evidence="17">Single-pass type III membrane protein</topology>
    </subcellularLocation>
</comment>
<comment type="alternative products">
    <event type="alternative splicing"/>
    <isoform>
        <id>Q6IA17-1</id>
        <name>1</name>
        <sequence type="displayed"/>
    </isoform>
    <isoform>
        <id>Q6IA17-2</id>
        <name>2</name>
        <sequence type="described" ref="VSP_015717"/>
    </isoform>
</comment>
<comment type="tissue specificity">
    <text evidence="9 12">Mainly expressed in epithelial tissues such as kidney, lung and gut.</text>
</comment>
<comment type="induction">
    <text evidence="12">Down-regulated during inflammation by inhibition of an SP1-mediated pathway.</text>
</comment>
<comment type="similarity">
    <text evidence="17">Belongs to the interleukin-1 receptor family.</text>
</comment>
<organism>
    <name type="scientific">Homo sapiens</name>
    <name type="common">Human</name>
    <dbReference type="NCBI Taxonomy" id="9606"/>
    <lineage>
        <taxon>Eukaryota</taxon>
        <taxon>Metazoa</taxon>
        <taxon>Chordata</taxon>
        <taxon>Craniata</taxon>
        <taxon>Vertebrata</taxon>
        <taxon>Euteleostomi</taxon>
        <taxon>Mammalia</taxon>
        <taxon>Eutheria</taxon>
        <taxon>Euarchontoglires</taxon>
        <taxon>Primates</taxon>
        <taxon>Haplorrhini</taxon>
        <taxon>Catarrhini</taxon>
        <taxon>Hominidae</taxon>
        <taxon>Homo</taxon>
    </lineage>
</organism>
<gene>
    <name type="primary">SIGIRR</name>
    <name type="ORF">UNQ301/PRO342</name>
</gene>
<dbReference type="EMBL" id="AY358342">
    <property type="protein sequence ID" value="AAQ88708.1"/>
    <property type="molecule type" value="mRNA"/>
</dbReference>
<dbReference type="EMBL" id="AK025099">
    <property type="protein sequence ID" value="BAB15066.1"/>
    <property type="molecule type" value="mRNA"/>
</dbReference>
<dbReference type="EMBL" id="CR457338">
    <property type="protein sequence ID" value="CAG33619.1"/>
    <property type="molecule type" value="mRNA"/>
</dbReference>
<dbReference type="EMBL" id="AC138230">
    <property type="status" value="NOT_ANNOTATED_CDS"/>
    <property type="molecule type" value="Genomic_DNA"/>
</dbReference>
<dbReference type="EMBL" id="BC003591">
    <property type="protein sequence ID" value="AAH03591.1"/>
    <property type="molecule type" value="mRNA"/>
</dbReference>
<dbReference type="EMBL" id="BC025953">
    <property type="protein sequence ID" value="AAH25953.1"/>
    <property type="molecule type" value="mRNA"/>
</dbReference>
<dbReference type="EMBL" id="BC106007">
    <property type="protein sequence ID" value="AAI06008.1"/>
    <property type="molecule type" value="mRNA"/>
</dbReference>
<dbReference type="CCDS" id="CCDS31325.1">
    <molecule id="Q6IA17-1"/>
</dbReference>
<dbReference type="RefSeq" id="NP_001128525.1">
    <molecule id="Q6IA17-1"/>
    <property type="nucleotide sequence ID" value="NM_001135053.2"/>
</dbReference>
<dbReference type="RefSeq" id="NP_001128526.1">
    <molecule id="Q6IA17-1"/>
    <property type="nucleotide sequence ID" value="NM_001135054.2"/>
</dbReference>
<dbReference type="RefSeq" id="NP_068577.2">
    <molecule id="Q6IA17-1"/>
    <property type="nucleotide sequence ID" value="NM_021805.3"/>
</dbReference>
<dbReference type="SMR" id="Q6IA17"/>
<dbReference type="BioGRID" id="121873">
    <property type="interactions" value="17"/>
</dbReference>
<dbReference type="ComplexPortal" id="CPX-10344">
    <property type="entry name" value="Interleukin-37 receptor-ligand complex"/>
</dbReference>
<dbReference type="FunCoup" id="Q6IA17">
    <property type="interactions" value="643"/>
</dbReference>
<dbReference type="IntAct" id="Q6IA17">
    <property type="interactions" value="6"/>
</dbReference>
<dbReference type="STRING" id="9606.ENSP00000403104"/>
<dbReference type="GlyCosmos" id="Q6IA17">
    <property type="glycosylation" value="4 sites, No reported glycans"/>
</dbReference>
<dbReference type="GlyGen" id="Q6IA17">
    <property type="glycosylation" value="6 sites, 1 N-linked glycan (1 site)"/>
</dbReference>
<dbReference type="iPTMnet" id="Q6IA17"/>
<dbReference type="PhosphoSitePlus" id="Q6IA17"/>
<dbReference type="SwissPalm" id="Q6IA17"/>
<dbReference type="BioMuta" id="SIGIRR"/>
<dbReference type="DMDM" id="311033538"/>
<dbReference type="jPOST" id="Q6IA17"/>
<dbReference type="MassIVE" id="Q6IA17"/>
<dbReference type="PaxDb" id="9606-ENSP00000403104"/>
<dbReference type="PeptideAtlas" id="Q6IA17"/>
<dbReference type="ProteomicsDB" id="66356">
    <molecule id="Q6IA17-1"/>
</dbReference>
<dbReference type="ProteomicsDB" id="66357">
    <molecule id="Q6IA17-2"/>
</dbReference>
<dbReference type="Antibodypedia" id="9633">
    <property type="antibodies" value="306 antibodies from 29 providers"/>
</dbReference>
<dbReference type="DNASU" id="59307"/>
<dbReference type="Ensembl" id="ENST00000332725.7">
    <molecule id="Q6IA17-1"/>
    <property type="protein sequence ID" value="ENSP00000333656.3"/>
    <property type="gene ID" value="ENSG00000185187.14"/>
</dbReference>
<dbReference type="Ensembl" id="ENST00000397632.7">
    <molecule id="Q6IA17-1"/>
    <property type="protein sequence ID" value="ENSP00000380756.3"/>
    <property type="gene ID" value="ENSG00000185187.14"/>
</dbReference>
<dbReference type="Ensembl" id="ENST00000431843.7">
    <molecule id="Q6IA17-1"/>
    <property type="protein sequence ID" value="ENSP00000403104.2"/>
    <property type="gene ID" value="ENSG00000185187.14"/>
</dbReference>
<dbReference type="Ensembl" id="ENST00000714413.1">
    <molecule id="Q6IA17-1"/>
    <property type="protein sequence ID" value="ENSP00000519683.1"/>
    <property type="gene ID" value="ENSG00000185187.14"/>
</dbReference>
<dbReference type="Ensembl" id="ENST00000714416.1">
    <molecule id="Q6IA17-1"/>
    <property type="protein sequence ID" value="ENSP00000519686.1"/>
    <property type="gene ID" value="ENSG00000185187.14"/>
</dbReference>
<dbReference type="GeneID" id="59307"/>
<dbReference type="KEGG" id="hsa:59307"/>
<dbReference type="MANE-Select" id="ENST00000431843.7">
    <property type="protein sequence ID" value="ENSP00000403104.2"/>
    <property type="RefSeq nucleotide sequence ID" value="NM_001135054.2"/>
    <property type="RefSeq protein sequence ID" value="NP_001128526.1"/>
</dbReference>
<dbReference type="UCSC" id="uc001lpd.3">
    <molecule id="Q6IA17-1"/>
    <property type="organism name" value="human"/>
</dbReference>
<dbReference type="AGR" id="HGNC:30575"/>
<dbReference type="CTD" id="59307"/>
<dbReference type="DisGeNET" id="59307"/>
<dbReference type="GeneCards" id="SIGIRR"/>
<dbReference type="HGNC" id="HGNC:30575">
    <property type="gene designation" value="SIGIRR"/>
</dbReference>
<dbReference type="HPA" id="ENSG00000185187">
    <property type="expression patterns" value="Low tissue specificity"/>
</dbReference>
<dbReference type="MalaCards" id="SIGIRR"/>
<dbReference type="MIM" id="605478">
    <property type="type" value="gene"/>
</dbReference>
<dbReference type="neXtProt" id="NX_Q6IA17"/>
<dbReference type="OpenTargets" id="ENSG00000185187"/>
<dbReference type="PharmGKB" id="PA142670915"/>
<dbReference type="VEuPathDB" id="HostDB:ENSG00000185187"/>
<dbReference type="eggNOG" id="ENOG502QVF7">
    <property type="taxonomic scope" value="Eukaryota"/>
</dbReference>
<dbReference type="GeneTree" id="ENSGT01090000259985"/>
<dbReference type="HOGENOM" id="CLU_040046_0_0_1"/>
<dbReference type="InParanoid" id="Q6IA17"/>
<dbReference type="OMA" id="WCTNNFR"/>
<dbReference type="OrthoDB" id="6075577at2759"/>
<dbReference type="PAN-GO" id="Q6IA17">
    <property type="GO annotations" value="0 GO annotations based on evolutionary models"/>
</dbReference>
<dbReference type="PhylomeDB" id="Q6IA17"/>
<dbReference type="TreeFam" id="TF325519"/>
<dbReference type="PathwayCommons" id="Q6IA17"/>
<dbReference type="Reactome" id="R-HSA-166058">
    <property type="pathway name" value="MyD88:MAL(TIRAP) cascade initiated on plasma membrane"/>
</dbReference>
<dbReference type="Reactome" id="R-HSA-9008059">
    <property type="pathway name" value="Interleukin-37 signaling"/>
</dbReference>
<dbReference type="SignaLink" id="Q6IA17"/>
<dbReference type="BioGRID-ORCS" id="59307">
    <property type="hits" value="16 hits in 1156 CRISPR screens"/>
</dbReference>
<dbReference type="ChiTaRS" id="SIGIRR">
    <property type="organism name" value="human"/>
</dbReference>
<dbReference type="GeneWiki" id="SIGIRR"/>
<dbReference type="GenomeRNAi" id="59307"/>
<dbReference type="Pharos" id="Q6IA17">
    <property type="development level" value="Tbio"/>
</dbReference>
<dbReference type="PRO" id="PR:Q6IA17"/>
<dbReference type="Proteomes" id="UP000005640">
    <property type="component" value="Chromosome 11"/>
</dbReference>
<dbReference type="RNAct" id="Q6IA17">
    <property type="molecule type" value="protein"/>
</dbReference>
<dbReference type="Bgee" id="ENSG00000185187">
    <property type="expression patterns" value="Expressed in granulocyte and 176 other cell types or tissues"/>
</dbReference>
<dbReference type="ExpressionAtlas" id="Q6IA17">
    <property type="expression patterns" value="baseline and differential"/>
</dbReference>
<dbReference type="GO" id="GO:0009986">
    <property type="term" value="C:cell surface"/>
    <property type="evidence" value="ECO:0000318"/>
    <property type="project" value="GO_Central"/>
</dbReference>
<dbReference type="GO" id="GO:0016020">
    <property type="term" value="C:membrane"/>
    <property type="evidence" value="ECO:0000315"/>
    <property type="project" value="HGNC-UCL"/>
</dbReference>
<dbReference type="GO" id="GO:0005886">
    <property type="term" value="C:plasma membrane"/>
    <property type="evidence" value="ECO:0000318"/>
    <property type="project" value="GO_Central"/>
</dbReference>
<dbReference type="GO" id="GO:0006953">
    <property type="term" value="P:acute-phase response"/>
    <property type="evidence" value="ECO:0000250"/>
    <property type="project" value="HGNC-UCL"/>
</dbReference>
<dbReference type="GO" id="GO:0007166">
    <property type="term" value="P:cell surface receptor signaling pathway"/>
    <property type="evidence" value="ECO:0000318"/>
    <property type="project" value="GO_Central"/>
</dbReference>
<dbReference type="GO" id="GO:0032682">
    <property type="term" value="P:negative regulation of chemokine production"/>
    <property type="evidence" value="ECO:0000250"/>
    <property type="project" value="HGNC-UCL"/>
</dbReference>
<dbReference type="GO" id="GO:0001960">
    <property type="term" value="P:negative regulation of cytokine-mediated signaling pathway"/>
    <property type="evidence" value="ECO:0000250"/>
    <property type="project" value="HGNC-UCL"/>
</dbReference>
<dbReference type="GO" id="GO:2000660">
    <property type="term" value="P:negative regulation of interleukin-1-mediated signaling pathway"/>
    <property type="evidence" value="ECO:0007669"/>
    <property type="project" value="Ensembl"/>
</dbReference>
<dbReference type="GO" id="GO:0031665">
    <property type="term" value="P:negative regulation of lipopolysaccharide-mediated signaling pathway"/>
    <property type="evidence" value="ECO:0000304"/>
    <property type="project" value="HGNC-UCL"/>
</dbReference>
<dbReference type="GO" id="GO:0045751">
    <property type="term" value="P:negative regulation of Toll signaling pathway"/>
    <property type="evidence" value="ECO:0000315"/>
    <property type="project" value="HGNC-UCL"/>
</dbReference>
<dbReference type="FunFam" id="2.60.40.10:FF:001586">
    <property type="entry name" value="Single Ig IL-1-related receptor"/>
    <property type="match status" value="1"/>
</dbReference>
<dbReference type="FunFam" id="3.40.50.10140:FF:000011">
    <property type="entry name" value="single Ig IL-1-related receptor isoform X1"/>
    <property type="match status" value="1"/>
</dbReference>
<dbReference type="Gene3D" id="2.60.40.10">
    <property type="entry name" value="Immunoglobulins"/>
    <property type="match status" value="1"/>
</dbReference>
<dbReference type="Gene3D" id="3.40.50.10140">
    <property type="entry name" value="Toll/interleukin-1 receptor homology (TIR) domain"/>
    <property type="match status" value="1"/>
</dbReference>
<dbReference type="InterPro" id="IPR007110">
    <property type="entry name" value="Ig-like_dom"/>
</dbReference>
<dbReference type="InterPro" id="IPR036179">
    <property type="entry name" value="Ig-like_dom_sf"/>
</dbReference>
<dbReference type="InterPro" id="IPR013783">
    <property type="entry name" value="Ig-like_fold"/>
</dbReference>
<dbReference type="InterPro" id="IPR015621">
    <property type="entry name" value="IL-1_rcpt_fam"/>
</dbReference>
<dbReference type="InterPro" id="IPR000157">
    <property type="entry name" value="TIR_dom"/>
</dbReference>
<dbReference type="InterPro" id="IPR035897">
    <property type="entry name" value="Toll_tir_struct_dom_sf"/>
</dbReference>
<dbReference type="PANTHER" id="PTHR11890">
    <property type="entry name" value="INTERLEUKIN-1 RECEPTOR FAMILY MEMBER"/>
    <property type="match status" value="1"/>
</dbReference>
<dbReference type="PANTHER" id="PTHR11890:SF19">
    <property type="entry name" value="SINGLE IG IL-1-RELATED RECEPTOR"/>
    <property type="match status" value="1"/>
</dbReference>
<dbReference type="Pfam" id="PF01582">
    <property type="entry name" value="TIR"/>
    <property type="match status" value="1"/>
</dbReference>
<dbReference type="PRINTS" id="PR01537">
    <property type="entry name" value="INTRLKN1R1F"/>
</dbReference>
<dbReference type="SMART" id="SM00255">
    <property type="entry name" value="TIR"/>
    <property type="match status" value="1"/>
</dbReference>
<dbReference type="SUPFAM" id="SSF48726">
    <property type="entry name" value="Immunoglobulin"/>
    <property type="match status" value="1"/>
</dbReference>
<dbReference type="SUPFAM" id="SSF52200">
    <property type="entry name" value="Toll/Interleukin receptor TIR domain"/>
    <property type="match status" value="1"/>
</dbReference>
<dbReference type="PROSITE" id="PS50835">
    <property type="entry name" value="IG_LIKE"/>
    <property type="match status" value="1"/>
</dbReference>
<dbReference type="PROSITE" id="PS50104">
    <property type="entry name" value="TIR"/>
    <property type="match status" value="1"/>
</dbReference>
<proteinExistence type="evidence at protein level"/>